<evidence type="ECO:0000255" key="1">
    <source>
        <dbReference type="HAMAP-Rule" id="MF_00033"/>
    </source>
</evidence>
<comment type="function">
    <text evidence="1">Cell wall formation. Catalyzes the transfer of a GlcNAc subunit on undecaprenyl-pyrophosphoryl-MurNAc-pentapeptide (lipid intermediate I) to form undecaprenyl-pyrophosphoryl-MurNAc-(pentapeptide)GlcNAc (lipid intermediate II).</text>
</comment>
<comment type="catalytic activity">
    <reaction evidence="1">
        <text>Mur2Ac(oyl-L-Ala-gamma-D-Glu-L-Lys-D-Ala-D-Ala)-di-trans,octa-cis-undecaprenyl diphosphate + UDP-N-acetyl-alpha-D-glucosamine = beta-D-GlcNAc-(1-&gt;4)-Mur2Ac(oyl-L-Ala-gamma-D-Glu-L-Lys-D-Ala-D-Ala)-di-trans,octa-cis-undecaprenyl diphosphate + UDP + H(+)</text>
        <dbReference type="Rhea" id="RHEA:23192"/>
        <dbReference type="ChEBI" id="CHEBI:15378"/>
        <dbReference type="ChEBI" id="CHEBI:57705"/>
        <dbReference type="ChEBI" id="CHEBI:58223"/>
        <dbReference type="ChEBI" id="CHEBI:60032"/>
        <dbReference type="ChEBI" id="CHEBI:60033"/>
        <dbReference type="EC" id="2.4.1.227"/>
    </reaction>
</comment>
<comment type="pathway">
    <text evidence="1">Cell wall biogenesis; peptidoglycan biosynthesis.</text>
</comment>
<comment type="subcellular location">
    <subcellularLocation>
        <location evidence="1">Cell membrane</location>
        <topology evidence="1">Peripheral membrane protein</topology>
        <orientation evidence="1">Cytoplasmic side</orientation>
    </subcellularLocation>
</comment>
<comment type="similarity">
    <text evidence="1">Belongs to the glycosyltransferase 28 family. MurG subfamily.</text>
</comment>
<sequence length="358" mass="39971">MGKKIVFTGGGTVGHVTLNLILIPKFIKDGWEVHYIGDKNGIEHEQINQSGLDITFHSIATGKLRRYFSWQNMLDVFKVGVGVLQSIAIIAKLRPQALFSKGGFVSVPPVVAARLLKVPVFVHESDLSMGLANKIAYKFATIMYTTFEQSKDLIKTKHIGAVTKVMDCKKSFENTDLTSIKEAFDPNLKTLLFIGGSAGAKVFNDFITQTPELEEKYNVINISGDSSLNRLKKNLYRVDYVTDLYQPLMNLADVVVTRGGSNTIFELVAMKKLHLIIPLGREASRGDQLENAAYFEEKGYALQLPESELNINTLEKQINLLISNSESYEKNMSQSSEIKSQDEFYQLLIDDMAKVTKG</sequence>
<gene>
    <name evidence="1" type="primary">murG</name>
    <name type="ordered locus">gbs0523</name>
</gene>
<feature type="chain" id="PRO_0000225100" description="UDP-N-acetylglucosamine--N-acetylmuramyl-(pentapeptide) pyrophosphoryl-undecaprenol N-acetylglucosamine transferase">
    <location>
        <begin position="1"/>
        <end position="358"/>
    </location>
</feature>
<feature type="binding site" evidence="1">
    <location>
        <position position="197"/>
    </location>
    <ligand>
        <name>UDP-N-acetyl-alpha-D-glucosamine</name>
        <dbReference type="ChEBI" id="CHEBI:57705"/>
    </ligand>
</feature>
<feature type="binding site" evidence="1">
    <location>
        <position position="288"/>
    </location>
    <ligand>
        <name>UDP-N-acetyl-alpha-D-glucosamine</name>
        <dbReference type="ChEBI" id="CHEBI:57705"/>
    </ligand>
</feature>
<organism>
    <name type="scientific">Streptococcus agalactiae serotype III (strain NEM316)</name>
    <dbReference type="NCBI Taxonomy" id="211110"/>
    <lineage>
        <taxon>Bacteria</taxon>
        <taxon>Bacillati</taxon>
        <taxon>Bacillota</taxon>
        <taxon>Bacilli</taxon>
        <taxon>Lactobacillales</taxon>
        <taxon>Streptococcaceae</taxon>
        <taxon>Streptococcus</taxon>
    </lineage>
</organism>
<name>MURG_STRA3</name>
<proteinExistence type="inferred from homology"/>
<protein>
    <recommendedName>
        <fullName evidence="1">UDP-N-acetylglucosamine--N-acetylmuramyl-(pentapeptide) pyrophosphoryl-undecaprenol N-acetylglucosamine transferase</fullName>
        <ecNumber evidence="1">2.4.1.227</ecNumber>
    </recommendedName>
    <alternativeName>
        <fullName evidence="1">Undecaprenyl-PP-MurNAc-pentapeptide-UDPGlcNAc GlcNAc transferase</fullName>
    </alternativeName>
</protein>
<keyword id="KW-0131">Cell cycle</keyword>
<keyword id="KW-0132">Cell division</keyword>
<keyword id="KW-1003">Cell membrane</keyword>
<keyword id="KW-0133">Cell shape</keyword>
<keyword id="KW-0961">Cell wall biogenesis/degradation</keyword>
<keyword id="KW-0328">Glycosyltransferase</keyword>
<keyword id="KW-0472">Membrane</keyword>
<keyword id="KW-0573">Peptidoglycan synthesis</keyword>
<keyword id="KW-0808">Transferase</keyword>
<dbReference type="EC" id="2.4.1.227" evidence="1"/>
<dbReference type="EMBL" id="AL766845">
    <property type="protein sequence ID" value="CAD46167.1"/>
    <property type="molecule type" value="Genomic_DNA"/>
</dbReference>
<dbReference type="RefSeq" id="WP_000516700.1">
    <property type="nucleotide sequence ID" value="NC_004368.1"/>
</dbReference>
<dbReference type="SMR" id="Q8E6P0"/>
<dbReference type="CAZy" id="GT28">
    <property type="family name" value="Glycosyltransferase Family 28"/>
</dbReference>
<dbReference type="KEGG" id="san:gbs0523"/>
<dbReference type="eggNOG" id="COG0707">
    <property type="taxonomic scope" value="Bacteria"/>
</dbReference>
<dbReference type="HOGENOM" id="CLU_037404_0_0_9"/>
<dbReference type="UniPathway" id="UPA00219"/>
<dbReference type="Proteomes" id="UP000000823">
    <property type="component" value="Chromosome"/>
</dbReference>
<dbReference type="GO" id="GO:0005886">
    <property type="term" value="C:plasma membrane"/>
    <property type="evidence" value="ECO:0007669"/>
    <property type="project" value="UniProtKB-SubCell"/>
</dbReference>
<dbReference type="GO" id="GO:0050511">
    <property type="term" value="F:undecaprenyldiphospho-muramoylpentapeptide beta-N-acetylglucosaminyltransferase activity"/>
    <property type="evidence" value="ECO:0007669"/>
    <property type="project" value="UniProtKB-UniRule"/>
</dbReference>
<dbReference type="GO" id="GO:0005975">
    <property type="term" value="P:carbohydrate metabolic process"/>
    <property type="evidence" value="ECO:0007669"/>
    <property type="project" value="InterPro"/>
</dbReference>
<dbReference type="GO" id="GO:0051301">
    <property type="term" value="P:cell division"/>
    <property type="evidence" value="ECO:0007669"/>
    <property type="project" value="UniProtKB-KW"/>
</dbReference>
<dbReference type="GO" id="GO:0071555">
    <property type="term" value="P:cell wall organization"/>
    <property type="evidence" value="ECO:0007669"/>
    <property type="project" value="UniProtKB-KW"/>
</dbReference>
<dbReference type="GO" id="GO:0030259">
    <property type="term" value="P:lipid glycosylation"/>
    <property type="evidence" value="ECO:0007669"/>
    <property type="project" value="UniProtKB-UniRule"/>
</dbReference>
<dbReference type="GO" id="GO:0009252">
    <property type="term" value="P:peptidoglycan biosynthetic process"/>
    <property type="evidence" value="ECO:0007669"/>
    <property type="project" value="UniProtKB-UniRule"/>
</dbReference>
<dbReference type="GO" id="GO:0008360">
    <property type="term" value="P:regulation of cell shape"/>
    <property type="evidence" value="ECO:0007669"/>
    <property type="project" value="UniProtKB-KW"/>
</dbReference>
<dbReference type="CDD" id="cd03785">
    <property type="entry name" value="GT28_MurG"/>
    <property type="match status" value="1"/>
</dbReference>
<dbReference type="Gene3D" id="3.40.50.2000">
    <property type="entry name" value="Glycogen Phosphorylase B"/>
    <property type="match status" value="2"/>
</dbReference>
<dbReference type="HAMAP" id="MF_00033">
    <property type="entry name" value="MurG"/>
    <property type="match status" value="1"/>
</dbReference>
<dbReference type="InterPro" id="IPR006009">
    <property type="entry name" value="GlcNAc_MurG"/>
</dbReference>
<dbReference type="InterPro" id="IPR007235">
    <property type="entry name" value="Glyco_trans_28_C"/>
</dbReference>
<dbReference type="InterPro" id="IPR004276">
    <property type="entry name" value="GlycoTrans_28_N"/>
</dbReference>
<dbReference type="PANTHER" id="PTHR21015:SF27">
    <property type="entry name" value="UDP-N-ACETYLGLUCOSAMINE--N-ACETYLMURAMYL-(PENTAPEPTIDE) PYROPHOSPHORYL-UNDECAPRENOL N-ACETYLGLUCOSAMINE TRANSFERASE"/>
    <property type="match status" value="1"/>
</dbReference>
<dbReference type="PANTHER" id="PTHR21015">
    <property type="entry name" value="UDP-N-ACETYLGLUCOSAMINE--N-ACETYLMURAMYL-(PENTAPEPTIDE) PYROPHOSPHORYL-UNDECAPRENOL N-ACETYLGLUCOSAMINE TRANSFERASE 1"/>
    <property type="match status" value="1"/>
</dbReference>
<dbReference type="Pfam" id="PF04101">
    <property type="entry name" value="Glyco_tran_28_C"/>
    <property type="match status" value="1"/>
</dbReference>
<dbReference type="Pfam" id="PF03033">
    <property type="entry name" value="Glyco_transf_28"/>
    <property type="match status" value="1"/>
</dbReference>
<dbReference type="SUPFAM" id="SSF53756">
    <property type="entry name" value="UDP-Glycosyltransferase/glycogen phosphorylase"/>
    <property type="match status" value="1"/>
</dbReference>
<reference key="1">
    <citation type="journal article" date="2002" name="Mol. Microbiol.">
        <title>Genome sequence of Streptococcus agalactiae, a pathogen causing invasive neonatal disease.</title>
        <authorList>
            <person name="Glaser P."/>
            <person name="Rusniok C."/>
            <person name="Buchrieser C."/>
            <person name="Chevalier F."/>
            <person name="Frangeul L."/>
            <person name="Msadek T."/>
            <person name="Zouine M."/>
            <person name="Couve E."/>
            <person name="Lalioui L."/>
            <person name="Poyart C."/>
            <person name="Trieu-Cuot P."/>
            <person name="Kunst F."/>
        </authorList>
    </citation>
    <scope>NUCLEOTIDE SEQUENCE [LARGE SCALE GENOMIC DNA]</scope>
    <source>
        <strain>NEM316</strain>
    </source>
</reference>
<accession>Q8E6P0</accession>